<organism>
    <name type="scientific">Pyrococcus furiosus (strain ATCC 43587 / DSM 3638 / JCM 8422 / Vc1)</name>
    <dbReference type="NCBI Taxonomy" id="186497"/>
    <lineage>
        <taxon>Archaea</taxon>
        <taxon>Methanobacteriati</taxon>
        <taxon>Methanobacteriota</taxon>
        <taxon>Thermococci</taxon>
        <taxon>Thermococcales</taxon>
        <taxon>Thermococcaceae</taxon>
        <taxon>Pyrococcus</taxon>
    </lineage>
</organism>
<accession>Q8U4J3</accession>
<accession>Q9P9H2</accession>
<accession>Q9P9H3</accession>
<proteinExistence type="evidence at protein level"/>
<comment type="function">
    <text evidence="3 4">Part of the RFC clamp loader complex which loads the PCNA sliding clamp onto DNA. The complex possesses DNA-dependent ATPase activity which is further stimulated by PCNA.</text>
</comment>
<comment type="subunit">
    <text evidence="3">Heteromultimer composed of three to four small subunits (RfcS) and one to two large subunits (RfcL).</text>
</comment>
<comment type="PTM">
    <text evidence="6">This protein undergoes a protein self splicing that involves a post-translational excision of the intervening region (intein) followed by peptide ligation.</text>
</comment>
<comment type="miscellaneous">
    <text>The intein interrupts the potential ATP-binding site.</text>
</comment>
<comment type="similarity">
    <text evidence="6">Belongs to the activator 1 small subunits family. RfcS subfamily.</text>
</comment>
<evidence type="ECO:0000255" key="1"/>
<evidence type="ECO:0000255" key="2">
    <source>
        <dbReference type="PROSITE-ProRule" id="PRU00273"/>
    </source>
</evidence>
<evidence type="ECO:0000269" key="3">
    <source>
    </source>
</evidence>
<evidence type="ECO:0000269" key="4">
    <source>
    </source>
</evidence>
<evidence type="ECO:0000269" key="5">
    <source>
    </source>
</evidence>
<evidence type="ECO:0000305" key="6"/>
<evidence type="ECO:0007829" key="7">
    <source>
        <dbReference type="PDB" id="1IQP"/>
    </source>
</evidence>
<name>RFCS_PYRFU</name>
<sequence length="852" mass="97793">MSEEIREVKVLEKPWVEKYRPQRLDDIVGQEHIVKRLKHYVKTGSMPHLLFAGPPGVGKCLTGDTKVIANGQLFELGELVEKLSGGRFGPTPVKGLKVLGIDEDGKLREFEVQYVYKDRTDRLIKIKTQLGRELKVTPYHPLLVNRENGEIKWIKAEELKPGDKLAIPSFLPLITGENPLAEWLGYFMGSGYAYPSNSVITFTNEDPLIRQRFMELTEKLFPDAKIRERIHADGTPEVYVVSRKAWSLVNSISLTLIPREGWKGIRSFLRAYSDCNGRIESDAIVLSTDNNDMAQQIAYALASFGIIAKMDGEDVIISGSDNIERFLNEIGFSTQSKLKEAQKLIRKTNVRSDGLKINYELISYVKDRLRLNVNDKRNLSYRNAKELSWELMKEIYYRLEELERLKKVLSEPILIDWNEVAKKSDEVIEKAKIRAEKLLEYIKGERKPSFKEYIEIAKVLGINVERTIEAMKIFAKRYSSYAEIGRKLGTWNFNVKTILESDTVDNVEILEKIRKIELELIEEILSDGKLKEGIAYLIFLFQNELYWDEITEVKELRGDFIIYDLHVPGYHNFIAGNMPTVVHNTTAALALARELFGENWRHNFLELNASDERGINVIREKVKEFARTKPIGGASFKIIFLDEADALTQDAQQALRRTMEMFSSNVRFILSCNYSSKIIEPIQSRCAIFRFRPLRDEDIAKRLRYIAENEGLELTEEGLQAILYIAEGDMRRAINILQAAAALDKKITDENVFMVASRARPEDIREMMLLALKGNFLKAREKLREILLKQGLSGEDVLVQMHKEVFNLPIEEPKKVLLADKIGEYNFRLVEGANEIIQLEALLAQFTLIGKK</sequence>
<keyword id="KW-0002">3D-structure</keyword>
<keyword id="KW-0067">ATP-binding</keyword>
<keyword id="KW-0068">Autocatalytic cleavage</keyword>
<keyword id="KW-0903">Direct protein sequencing</keyword>
<keyword id="KW-0235">DNA replication</keyword>
<keyword id="KW-0547">Nucleotide-binding</keyword>
<keyword id="KW-0651">Protein splicing</keyword>
<keyword id="KW-1185">Reference proteome</keyword>
<gene>
    <name type="primary">rfcS</name>
    <name type="ordered locus">PF0093</name>
</gene>
<feature type="chain" id="PRO_0000030376" description="Replication factor C small subunit, 1st part" evidence="1">
    <location>
        <begin position="1"/>
        <end position="59"/>
    </location>
</feature>
<feature type="chain" id="PRO_0000030377" description="Pfu RFC intein" evidence="1">
    <location>
        <begin position="60"/>
        <end position="584"/>
    </location>
</feature>
<feature type="chain" id="PRO_0000030378" description="Replication factor C small subunit, 2nd part" evidence="1">
    <location>
        <begin position="585"/>
        <end position="852"/>
    </location>
</feature>
<feature type="domain" description="DOD-type homing endonuclease" evidence="2">
    <location>
        <begin position="183"/>
        <end position="306"/>
    </location>
</feature>
<feature type="mutagenesis site" description="Decreases the stability of the PCNA-RFC complex and reduces the clamp-loading activity; when associated with A-795; A-796; A-831 and A-835." evidence="5">
    <original>E</original>
    <variation>A</variation>
    <location>
        <position position="785"/>
    </location>
</feature>
<feature type="mutagenesis site" description="Decreases the stability of the PCNA-RFC complex and reduces the clamp-loading activity; when associated with A-785; A-796; A-831 and A-835." evidence="5">
    <original>E</original>
    <variation>A</variation>
    <location>
        <position position="795"/>
    </location>
</feature>
<feature type="mutagenesis site" description="Decreases the stability of the PCNA-RFC complex and reduces the clamp-loading activity; when associated with A-785; A-795; A-831 and A-835." evidence="5">
    <original>D</original>
    <variation>A</variation>
    <location>
        <position position="796"/>
    </location>
</feature>
<feature type="mutagenesis site" description="Decreases the stability of the PCNA-RFC complex and reduces the clamp-loading activity; when associated with A-785; A-795; A-796 and A-835." evidence="5">
    <original>E</original>
    <variation>A</variation>
    <location>
        <position position="831"/>
    </location>
</feature>
<feature type="mutagenesis site" description="Decreases the stability of the PCNA-RFC complex and reduces the clamp-loading activity; when associated with A-785; A-795; A-796 and A-831." evidence="5">
    <original>E</original>
    <variation>A</variation>
    <location>
        <position position="835"/>
    </location>
</feature>
<feature type="turn" evidence="7">
    <location>
        <begin position="558"/>
        <end position="560"/>
    </location>
</feature>
<feature type="helix" evidence="7">
    <location>
        <begin position="565"/>
        <end position="575"/>
    </location>
</feature>
<feature type="strand" evidence="7">
    <location>
        <begin position="580"/>
        <end position="583"/>
    </location>
</feature>
<feature type="helix" evidence="7">
    <location>
        <begin position="584"/>
        <end position="596"/>
    </location>
</feature>
<feature type="helix" evidence="7">
    <location>
        <begin position="597"/>
        <end position="599"/>
    </location>
</feature>
<feature type="helix" evidence="7">
    <location>
        <begin position="600"/>
        <end position="603"/>
    </location>
</feature>
<feature type="strand" evidence="7">
    <location>
        <begin position="604"/>
        <end position="608"/>
    </location>
</feature>
<feature type="helix" evidence="7">
    <location>
        <begin position="612"/>
        <end position="616"/>
    </location>
</feature>
<feature type="helix" evidence="7">
    <location>
        <begin position="619"/>
        <end position="627"/>
    </location>
</feature>
<feature type="helix" evidence="7">
    <location>
        <begin position="631"/>
        <end position="633"/>
    </location>
</feature>
<feature type="strand" evidence="7">
    <location>
        <begin position="637"/>
        <end position="642"/>
    </location>
</feature>
<feature type="helix" evidence="7">
    <location>
        <begin position="644"/>
        <end position="646"/>
    </location>
</feature>
<feature type="helix" evidence="7">
    <location>
        <begin position="649"/>
        <end position="661"/>
    </location>
</feature>
<feature type="turn" evidence="7">
    <location>
        <begin position="662"/>
        <end position="665"/>
    </location>
</feature>
<feature type="strand" evidence="7">
    <location>
        <begin position="666"/>
        <end position="673"/>
    </location>
</feature>
<feature type="helix" evidence="7">
    <location>
        <begin position="675"/>
        <end position="677"/>
    </location>
</feature>
<feature type="helix" evidence="7">
    <location>
        <begin position="680"/>
        <end position="684"/>
    </location>
</feature>
<feature type="strand" evidence="7">
    <location>
        <begin position="686"/>
        <end position="690"/>
    </location>
</feature>
<feature type="helix" evidence="7">
    <location>
        <begin position="696"/>
        <end position="708"/>
    </location>
</feature>
<feature type="turn" evidence="7">
    <location>
        <begin position="709"/>
        <end position="711"/>
    </location>
</feature>
<feature type="helix" evidence="7">
    <location>
        <begin position="716"/>
        <end position="726"/>
    </location>
</feature>
<feature type="helix" evidence="7">
    <location>
        <begin position="730"/>
        <end position="741"/>
    </location>
</feature>
<feature type="strand" evidence="7">
    <location>
        <begin position="745"/>
        <end position="747"/>
    </location>
</feature>
<feature type="helix" evidence="7">
    <location>
        <begin position="749"/>
        <end position="755"/>
    </location>
</feature>
<feature type="helix" evidence="7">
    <location>
        <begin position="761"/>
        <end position="773"/>
    </location>
</feature>
<feature type="helix" evidence="7">
    <location>
        <begin position="776"/>
        <end position="790"/>
    </location>
</feature>
<feature type="helix" evidence="7">
    <location>
        <begin position="794"/>
        <end position="804"/>
    </location>
</feature>
<feature type="helix" evidence="7">
    <location>
        <begin position="805"/>
        <end position="807"/>
    </location>
</feature>
<feature type="strand" evidence="7">
    <location>
        <begin position="808"/>
        <end position="810"/>
    </location>
</feature>
<feature type="helix" evidence="7">
    <location>
        <begin position="812"/>
        <end position="830"/>
    </location>
</feature>
<feature type="helix" evidence="7">
    <location>
        <begin position="835"/>
        <end position="850"/>
    </location>
</feature>
<dbReference type="EMBL" id="AE009950">
    <property type="protein sequence ID" value="AAL80217.1"/>
    <property type="molecule type" value="Genomic_DNA"/>
</dbReference>
<dbReference type="EMBL" id="AB037375">
    <property type="protein sequence ID" value="BAB03291.1"/>
    <property type="molecule type" value="Genomic_DNA"/>
</dbReference>
<dbReference type="EMBL" id="AB037375">
    <property type="protein sequence ID" value="BAB03292.1"/>
    <property type="molecule type" value="Genomic_DNA"/>
</dbReference>
<dbReference type="RefSeq" id="WP_011011205.1">
    <property type="nucleotide sequence ID" value="NZ_CP023154.1"/>
</dbReference>
<dbReference type="PDB" id="1IQP">
    <property type="method" value="X-ray"/>
    <property type="resolution" value="2.80 A"/>
    <property type="chains" value="A/B/C/D/E/F=1-59, A/B/C/D/E/F=585-852"/>
</dbReference>
<dbReference type="PDBsum" id="1IQP"/>
<dbReference type="SMR" id="Q8U4J3"/>
<dbReference type="STRING" id="186497.PF0093"/>
<dbReference type="PaxDb" id="186497-PF0093"/>
<dbReference type="KEGG" id="pfu:PF0093"/>
<dbReference type="PATRIC" id="fig|186497.12.peg.97"/>
<dbReference type="eggNOG" id="arCOG00469">
    <property type="taxonomic scope" value="Archaea"/>
</dbReference>
<dbReference type="eggNOG" id="arCOG03154">
    <property type="taxonomic scope" value="Archaea"/>
</dbReference>
<dbReference type="HOGENOM" id="CLU_015698_0_0_2"/>
<dbReference type="OrthoDB" id="7928at2157"/>
<dbReference type="PhylomeDB" id="Q8U4J3"/>
<dbReference type="EvolutionaryTrace" id="Q8U4J3"/>
<dbReference type="Proteomes" id="UP000001013">
    <property type="component" value="Chromosome"/>
</dbReference>
<dbReference type="GO" id="GO:0005663">
    <property type="term" value="C:DNA replication factor C complex"/>
    <property type="evidence" value="ECO:0007669"/>
    <property type="project" value="TreeGrafter"/>
</dbReference>
<dbReference type="GO" id="GO:0005524">
    <property type="term" value="F:ATP binding"/>
    <property type="evidence" value="ECO:0007669"/>
    <property type="project" value="UniProtKB-KW"/>
</dbReference>
<dbReference type="GO" id="GO:0016887">
    <property type="term" value="F:ATP hydrolysis activity"/>
    <property type="evidence" value="ECO:0007669"/>
    <property type="project" value="InterPro"/>
</dbReference>
<dbReference type="GO" id="GO:0003677">
    <property type="term" value="F:DNA binding"/>
    <property type="evidence" value="ECO:0007669"/>
    <property type="project" value="InterPro"/>
</dbReference>
<dbReference type="GO" id="GO:0003689">
    <property type="term" value="F:DNA clamp loader activity"/>
    <property type="evidence" value="ECO:0007669"/>
    <property type="project" value="TreeGrafter"/>
</dbReference>
<dbReference type="GO" id="GO:0004519">
    <property type="term" value="F:endonuclease activity"/>
    <property type="evidence" value="ECO:0007669"/>
    <property type="project" value="InterPro"/>
</dbReference>
<dbReference type="GO" id="GO:0006281">
    <property type="term" value="P:DNA repair"/>
    <property type="evidence" value="ECO:0007669"/>
    <property type="project" value="TreeGrafter"/>
</dbReference>
<dbReference type="GO" id="GO:0006261">
    <property type="term" value="P:DNA-templated DNA replication"/>
    <property type="evidence" value="ECO:0007669"/>
    <property type="project" value="TreeGrafter"/>
</dbReference>
<dbReference type="GO" id="GO:0016539">
    <property type="term" value="P:intein-mediated protein splicing"/>
    <property type="evidence" value="ECO:0007669"/>
    <property type="project" value="InterPro"/>
</dbReference>
<dbReference type="CDD" id="cd00009">
    <property type="entry name" value="AAA"/>
    <property type="match status" value="1"/>
</dbReference>
<dbReference type="CDD" id="cd00081">
    <property type="entry name" value="Hint"/>
    <property type="match status" value="1"/>
</dbReference>
<dbReference type="CDD" id="cd18140">
    <property type="entry name" value="HLD_clamp_RFC"/>
    <property type="match status" value="1"/>
</dbReference>
<dbReference type="FunFam" id="1.20.272.10:FF:000029">
    <property type="entry name" value="Replication factor C small subunit"/>
    <property type="match status" value="1"/>
</dbReference>
<dbReference type="FunFam" id="3.40.50.300:FF:003150">
    <property type="entry name" value="Replication factor C small subunit"/>
    <property type="match status" value="1"/>
</dbReference>
<dbReference type="FunFam" id="1.10.8.60:FF:000012">
    <property type="entry name" value="Replication factor C subunit 4"/>
    <property type="match status" value="1"/>
</dbReference>
<dbReference type="Gene3D" id="1.10.8.60">
    <property type="match status" value="1"/>
</dbReference>
<dbReference type="Gene3D" id="1.20.272.10">
    <property type="match status" value="1"/>
</dbReference>
<dbReference type="Gene3D" id="2.170.16.10">
    <property type="entry name" value="Hedgehog/Intein (Hint) domain"/>
    <property type="match status" value="2"/>
</dbReference>
<dbReference type="Gene3D" id="3.10.28.10">
    <property type="entry name" value="Homing endonucleases"/>
    <property type="match status" value="1"/>
</dbReference>
<dbReference type="Gene3D" id="3.40.50.300">
    <property type="entry name" value="P-loop containing nucleotide triphosphate hydrolases"/>
    <property type="match status" value="2"/>
</dbReference>
<dbReference type="InterPro" id="IPR003959">
    <property type="entry name" value="ATPase_AAA_core"/>
</dbReference>
<dbReference type="InterPro" id="IPR008921">
    <property type="entry name" value="DNA_pol3_clamp-load_cplx_C"/>
</dbReference>
<dbReference type="InterPro" id="IPR050238">
    <property type="entry name" value="DNA_Rep/Repair_Clamp_Loader"/>
</dbReference>
<dbReference type="InterPro" id="IPR003586">
    <property type="entry name" value="Hint_dom_C"/>
</dbReference>
<dbReference type="InterPro" id="IPR003587">
    <property type="entry name" value="Hint_dom_N"/>
</dbReference>
<dbReference type="InterPro" id="IPR036844">
    <property type="entry name" value="Hint_dom_sf"/>
</dbReference>
<dbReference type="InterPro" id="IPR027434">
    <property type="entry name" value="Homing_endonucl"/>
</dbReference>
<dbReference type="InterPro" id="IPR006142">
    <property type="entry name" value="INTEIN"/>
</dbReference>
<dbReference type="InterPro" id="IPR030934">
    <property type="entry name" value="Intein_C"/>
</dbReference>
<dbReference type="InterPro" id="IPR004042">
    <property type="entry name" value="Intein_endonuc_central"/>
</dbReference>
<dbReference type="InterPro" id="IPR006141">
    <property type="entry name" value="Intein_N"/>
</dbReference>
<dbReference type="InterPro" id="IPR004860">
    <property type="entry name" value="LAGLIDADG_dom"/>
</dbReference>
<dbReference type="InterPro" id="IPR027417">
    <property type="entry name" value="P-loop_NTPase"/>
</dbReference>
<dbReference type="InterPro" id="IPR013748">
    <property type="entry name" value="Rep_factorC_C"/>
</dbReference>
<dbReference type="InterPro" id="IPR047854">
    <property type="entry name" value="RFC_lid"/>
</dbReference>
<dbReference type="NCBIfam" id="TIGR01443">
    <property type="entry name" value="intein_Cterm"/>
    <property type="match status" value="1"/>
</dbReference>
<dbReference type="NCBIfam" id="TIGR01445">
    <property type="entry name" value="intein_Nterm"/>
    <property type="match status" value="1"/>
</dbReference>
<dbReference type="NCBIfam" id="NF001679">
    <property type="entry name" value="PRK00440.1"/>
    <property type="match status" value="1"/>
</dbReference>
<dbReference type="NCBIfam" id="NF003157">
    <property type="entry name" value="PRK04132.1-2"/>
    <property type="match status" value="1"/>
</dbReference>
<dbReference type="NCBIfam" id="NF003159">
    <property type="entry name" value="PRK04132.1-4"/>
    <property type="match status" value="1"/>
</dbReference>
<dbReference type="PANTHER" id="PTHR11669">
    <property type="entry name" value="REPLICATION FACTOR C / DNA POLYMERASE III GAMMA-TAU SUBUNIT"/>
    <property type="match status" value="1"/>
</dbReference>
<dbReference type="PANTHER" id="PTHR11669:SF20">
    <property type="entry name" value="REPLICATION FACTOR C SUBUNIT 4"/>
    <property type="match status" value="1"/>
</dbReference>
<dbReference type="Pfam" id="PF00004">
    <property type="entry name" value="AAA"/>
    <property type="match status" value="1"/>
</dbReference>
<dbReference type="Pfam" id="PF14890">
    <property type="entry name" value="Intein_splicing"/>
    <property type="match status" value="1"/>
</dbReference>
<dbReference type="Pfam" id="PF14528">
    <property type="entry name" value="LAGLIDADG_3"/>
    <property type="match status" value="2"/>
</dbReference>
<dbReference type="Pfam" id="PF08542">
    <property type="entry name" value="Rep_fac_C"/>
    <property type="match status" value="1"/>
</dbReference>
<dbReference type="PRINTS" id="PR00379">
    <property type="entry name" value="INTEIN"/>
</dbReference>
<dbReference type="SMART" id="SM00305">
    <property type="entry name" value="HintC"/>
    <property type="match status" value="1"/>
</dbReference>
<dbReference type="SMART" id="SM00306">
    <property type="entry name" value="HintN"/>
    <property type="match status" value="1"/>
</dbReference>
<dbReference type="SUPFAM" id="SSF51294">
    <property type="entry name" value="Hedgehog/intein (Hint) domain"/>
    <property type="match status" value="1"/>
</dbReference>
<dbReference type="SUPFAM" id="SSF55608">
    <property type="entry name" value="Homing endonucleases"/>
    <property type="match status" value="1"/>
</dbReference>
<dbReference type="SUPFAM" id="SSF52540">
    <property type="entry name" value="P-loop containing nucleoside triphosphate hydrolases"/>
    <property type="match status" value="2"/>
</dbReference>
<dbReference type="SUPFAM" id="SSF48019">
    <property type="entry name" value="post-AAA+ oligomerization domain-like"/>
    <property type="match status" value="1"/>
</dbReference>
<dbReference type="PROSITE" id="PS50818">
    <property type="entry name" value="INTEIN_C_TER"/>
    <property type="match status" value="1"/>
</dbReference>
<dbReference type="PROSITE" id="PS50819">
    <property type="entry name" value="INTEIN_ENDONUCLEASE"/>
    <property type="match status" value="1"/>
</dbReference>
<dbReference type="PROSITE" id="PS50817">
    <property type="entry name" value="INTEIN_N_TER"/>
    <property type="match status" value="1"/>
</dbReference>
<reference key="1">
    <citation type="journal article" date="1999" name="Genetics">
        <title>Divergence of the hyperthermophilic archaea Pyrococcus furiosus and P. horikoshii inferred from complete genomic sequences.</title>
        <authorList>
            <person name="Maeder D.L."/>
            <person name="Weiss R.B."/>
            <person name="Dunn D.M."/>
            <person name="Cherry J.L."/>
            <person name="Gonzalez J.M."/>
            <person name="DiRuggiero J."/>
            <person name="Robb F.T."/>
        </authorList>
    </citation>
    <scope>NUCLEOTIDE SEQUENCE [LARGE SCALE GENOMIC DNA]</scope>
    <source>
        <strain>ATCC 43587 / DSM 3638 / JCM 8422 / Vc1</strain>
    </source>
</reference>
<reference key="2">
    <citation type="journal article" date="2001" name="J. Bacteriol.">
        <title>Biochemical analysis of replication factor C from the hyperthermophilic archaeon Pyrococcus furiosus.</title>
        <authorList>
            <person name="Cann I.K.O."/>
            <person name="Ishino S."/>
            <person name="Yuasa M."/>
            <person name="Daiyasu H."/>
            <person name="Toh H."/>
            <person name="Ishino Y."/>
        </authorList>
    </citation>
    <scope>NUCLEOTIDE SEQUENCE [GENOMIC DNA] OF 1-59 AND 585-852</scope>
    <scope>PROTEIN SEQUENCE OF 2-9</scope>
    <scope>FUNCTION</scope>
    <scope>INTEIN SPLICING</scope>
    <scope>SUBUNIT</scope>
    <source>
        <strain>ATCC 43587 / DSM 3638 / JCM 8422 / Vc1</strain>
    </source>
</reference>
<reference key="3">
    <citation type="journal article" date="2001" name="J. Struct. Biol.">
        <title>Three-dimensional electron microscopy of the clamp loader small subunit from Pyrococcus furiosus.</title>
        <authorList>
            <person name="Mayanagi K."/>
            <person name="Miyata T."/>
            <person name="Oyama T."/>
            <person name="Ishino Y."/>
            <person name="Morikawa K."/>
        </authorList>
    </citation>
    <scope>ELECTRON MICROSCOPY</scope>
</reference>
<reference key="4">
    <citation type="journal article" date="2002" name="Genes Cells">
        <title>Physical interaction between proliferating cell nuclear antigen and replication factor C from Pyrococcus furiosus.</title>
        <authorList>
            <person name="Matsumiya S."/>
            <person name="Ishino S."/>
            <person name="Ishino Y."/>
            <person name="Morikawa K."/>
        </authorList>
    </citation>
    <scope>FUNCTION</scope>
</reference>
<reference key="5">
    <citation type="journal article" date="2003" name="Extremophiles">
        <title>Mutational analysis of Pyrococcus furiosus replication factor C based on the three-dimensional structure.</title>
        <authorList>
            <person name="Ishino S."/>
            <person name="Oyama T."/>
            <person name="Yuasa M."/>
            <person name="Morikawa K."/>
            <person name="Ishino Y."/>
        </authorList>
    </citation>
    <scope>MUTAGENESIS OF GLU-785; GLU-795; ASP-796; GLU-831 AND GLU-835</scope>
</reference>
<reference key="6">
    <citation type="journal article" date="2001" name="Mol. Cell">
        <title>Atomic structure of the clamp loader small subunit from Pyrococcus furiosus.</title>
        <authorList>
            <person name="Oyama T."/>
            <person name="Ishino Y."/>
            <person name="Cann I.K.O."/>
            <person name="Ishino S."/>
            <person name="Morikawa K."/>
        </authorList>
    </citation>
    <scope>X-RAY CRYSTALLOGRAPHY (2.8 ANGSTROMS)</scope>
</reference>
<protein>
    <recommendedName>
        <fullName>Replication factor C small subunit</fullName>
        <shortName>RFC small subunit</shortName>
    </recommendedName>
    <alternativeName>
        <fullName>Clamp loader small subunit</fullName>
    </alternativeName>
    <alternativeName>
        <fullName>PfuRFC small subunit</fullName>
    </alternativeName>
    <component>
        <recommendedName>
            <fullName>Pfu RFC intein</fullName>
        </recommendedName>
    </component>
</protein>